<proteinExistence type="evidence at protein level"/>
<evidence type="ECO:0000269" key="1">
    <source>
    </source>
</evidence>
<evidence type="ECO:0000269" key="2">
    <source>
    </source>
</evidence>
<evidence type="ECO:0000269" key="3">
    <source>
    </source>
</evidence>
<evidence type="ECO:0000269" key="4">
    <source>
    </source>
</evidence>
<evidence type="ECO:0000269" key="5">
    <source>
    </source>
</evidence>
<evidence type="ECO:0000269" key="6">
    <source>
    </source>
</evidence>
<evidence type="ECO:0000269" key="7">
    <source>
    </source>
</evidence>
<evidence type="ECO:0000305" key="8"/>
<evidence type="ECO:0007829" key="9">
    <source>
        <dbReference type="PDB" id="2B1E"/>
    </source>
</evidence>
<evidence type="ECO:0007829" key="10">
    <source>
        <dbReference type="PDB" id="2B7M"/>
    </source>
</evidence>
<evidence type="ECO:0007829" key="11">
    <source>
        <dbReference type="PDB" id="2PFV"/>
    </source>
</evidence>
<organism>
    <name type="scientific">Saccharomyces cerevisiae (strain ATCC 204508 / S288c)</name>
    <name type="common">Baker's yeast</name>
    <dbReference type="NCBI Taxonomy" id="559292"/>
    <lineage>
        <taxon>Eukaryota</taxon>
        <taxon>Fungi</taxon>
        <taxon>Dikarya</taxon>
        <taxon>Ascomycota</taxon>
        <taxon>Saccharomycotina</taxon>
        <taxon>Saccharomycetes</taxon>
        <taxon>Saccharomycetales</taxon>
        <taxon>Saccharomycetaceae</taxon>
        <taxon>Saccharomyces</taxon>
    </lineage>
</organism>
<accession>P19658</accession>
<accession>D6VW98</accession>
<accession>E9P961</accession>
<feature type="chain" id="PRO_0000118975" description="Exocyst complex component EXO70">
    <location>
        <begin position="1"/>
        <end position="623"/>
    </location>
</feature>
<feature type="sequence conflict" description="In Ref. 6; AAU09750." evidence="8" ref="6">
    <original>A</original>
    <variation>S</variation>
    <location>
        <position position="497"/>
    </location>
</feature>
<feature type="helix" evidence="9">
    <location>
        <begin position="69"/>
        <end position="71"/>
    </location>
</feature>
<feature type="helix" evidence="9">
    <location>
        <begin position="74"/>
        <end position="89"/>
    </location>
</feature>
<feature type="helix" evidence="9">
    <location>
        <begin position="92"/>
        <end position="95"/>
    </location>
</feature>
<feature type="helix" evidence="9">
    <location>
        <begin position="97"/>
        <end position="115"/>
    </location>
</feature>
<feature type="strand" evidence="11">
    <location>
        <begin position="116"/>
        <end position="119"/>
    </location>
</feature>
<feature type="turn" evidence="10">
    <location>
        <begin position="122"/>
        <end position="124"/>
    </location>
</feature>
<feature type="helix" evidence="9">
    <location>
        <begin position="125"/>
        <end position="153"/>
    </location>
</feature>
<feature type="helix" evidence="9">
    <location>
        <begin position="161"/>
        <end position="167"/>
    </location>
</feature>
<feature type="helix" evidence="9">
    <location>
        <begin position="176"/>
        <end position="191"/>
    </location>
</feature>
<feature type="helix" evidence="9">
    <location>
        <begin position="195"/>
        <end position="214"/>
    </location>
</feature>
<feature type="turn" evidence="9">
    <location>
        <begin position="215"/>
        <end position="217"/>
    </location>
</feature>
<feature type="helix" evidence="11">
    <location>
        <begin position="218"/>
        <end position="221"/>
    </location>
</feature>
<feature type="helix" evidence="9">
    <location>
        <begin position="239"/>
        <end position="260"/>
    </location>
</feature>
<feature type="helix" evidence="9">
    <location>
        <begin position="268"/>
        <end position="292"/>
    </location>
</feature>
<feature type="helix" evidence="11">
    <location>
        <begin position="298"/>
        <end position="301"/>
    </location>
</feature>
<feature type="helix" evidence="9">
    <location>
        <begin position="304"/>
        <end position="318"/>
    </location>
</feature>
<feature type="turn" evidence="9">
    <location>
        <begin position="319"/>
        <end position="321"/>
    </location>
</feature>
<feature type="helix" evidence="9">
    <location>
        <begin position="327"/>
        <end position="358"/>
    </location>
</feature>
<feature type="helix" evidence="9">
    <location>
        <begin position="370"/>
        <end position="382"/>
    </location>
</feature>
<feature type="helix" evidence="9">
    <location>
        <begin position="383"/>
        <end position="385"/>
    </location>
</feature>
<feature type="helix" evidence="9">
    <location>
        <begin position="386"/>
        <end position="392"/>
    </location>
</feature>
<feature type="turn" evidence="9">
    <location>
        <begin position="393"/>
        <end position="395"/>
    </location>
</feature>
<feature type="helix" evidence="9">
    <location>
        <begin position="398"/>
        <end position="400"/>
    </location>
</feature>
<feature type="helix" evidence="9">
    <location>
        <begin position="408"/>
        <end position="410"/>
    </location>
</feature>
<feature type="helix" evidence="9">
    <location>
        <begin position="423"/>
        <end position="450"/>
    </location>
</feature>
<feature type="helix" evidence="9">
    <location>
        <begin position="469"/>
        <end position="488"/>
    </location>
</feature>
<feature type="helix" evidence="9">
    <location>
        <begin position="492"/>
        <end position="495"/>
    </location>
</feature>
<feature type="turn" evidence="9">
    <location>
        <begin position="496"/>
        <end position="498"/>
    </location>
</feature>
<feature type="helix" evidence="9">
    <location>
        <begin position="499"/>
        <end position="532"/>
    </location>
</feature>
<feature type="strand" evidence="9">
    <location>
        <begin position="535"/>
        <end position="537"/>
    </location>
</feature>
<feature type="helix" evidence="9">
    <location>
        <begin position="542"/>
        <end position="563"/>
    </location>
</feature>
<feature type="helix" evidence="9">
    <location>
        <begin position="571"/>
        <end position="596"/>
    </location>
</feature>
<feature type="helix" evidence="9">
    <location>
        <begin position="597"/>
        <end position="599"/>
    </location>
</feature>
<feature type="strand" evidence="9">
    <location>
        <begin position="600"/>
        <end position="602"/>
    </location>
</feature>
<feature type="helix" evidence="9">
    <location>
        <begin position="603"/>
        <end position="605"/>
    </location>
</feature>
<feature type="helix" evidence="9">
    <location>
        <begin position="611"/>
        <end position="622"/>
    </location>
</feature>
<gene>
    <name type="primary">EXO70</name>
    <name type="ordered locus">YJL085W</name>
    <name type="ORF">J0932</name>
</gene>
<protein>
    <recommendedName>
        <fullName>Exocyst complex component EXO70</fullName>
    </recommendedName>
    <alternativeName>
        <fullName>Exocyst complex protein of 70 kDa</fullName>
    </alternativeName>
</protein>
<keyword id="KW-0002">3D-structure</keyword>
<keyword id="KW-0968">Cytoplasmic vesicle</keyword>
<keyword id="KW-0903">Direct protein sequencing</keyword>
<keyword id="KW-0268">Exocytosis</keyword>
<keyword id="KW-0653">Protein transport</keyword>
<keyword id="KW-1185">Reference proteome</keyword>
<keyword id="KW-0813">Transport</keyword>
<dbReference type="EMBL" id="Y08787">
    <property type="protein sequence ID" value="CAA70039.1"/>
    <property type="molecule type" value="Genomic_DNA"/>
</dbReference>
<dbReference type="EMBL" id="Y00473">
    <property type="protein sequence ID" value="CAA68535.1"/>
    <property type="molecule type" value="Genomic_DNA"/>
</dbReference>
<dbReference type="EMBL" id="X83502">
    <property type="protein sequence ID" value="CAA58485.1"/>
    <property type="molecule type" value="Genomic_DNA"/>
</dbReference>
<dbReference type="EMBL" id="Z49362">
    <property type="protein sequence ID" value="CAA89380.1"/>
    <property type="molecule type" value="Genomic_DNA"/>
</dbReference>
<dbReference type="EMBL" id="AY723833">
    <property type="protein sequence ID" value="AAU09750.1"/>
    <property type="molecule type" value="Genomic_DNA"/>
</dbReference>
<dbReference type="EMBL" id="J03546">
    <property type="protein sequence ID" value="AAA66919.1"/>
    <property type="molecule type" value="Genomic_DNA"/>
</dbReference>
<dbReference type="EMBL" id="BK006943">
    <property type="protein sequence ID" value="DAA08714.1"/>
    <property type="molecule type" value="Genomic_DNA"/>
</dbReference>
<dbReference type="PIR" id="A27300">
    <property type="entry name" value="A27300"/>
</dbReference>
<dbReference type="RefSeq" id="NP_012450.1">
    <property type="nucleotide sequence ID" value="NM_001181518.1"/>
</dbReference>
<dbReference type="PDB" id="2B1E">
    <property type="method" value="X-ray"/>
    <property type="resolution" value="2.00 A"/>
    <property type="chains" value="A=63-623"/>
</dbReference>
<dbReference type="PDB" id="2B7M">
    <property type="method" value="X-ray"/>
    <property type="resolution" value="3.50 A"/>
    <property type="chains" value="A/B/C/D=63-623"/>
</dbReference>
<dbReference type="PDB" id="2PFV">
    <property type="method" value="X-ray"/>
    <property type="resolution" value="2.10 A"/>
    <property type="chains" value="A=63-623"/>
</dbReference>
<dbReference type="PDB" id="5YFP">
    <property type="method" value="EM"/>
    <property type="resolution" value="4.40 A"/>
    <property type="chains" value="G=1-623"/>
</dbReference>
<dbReference type="PDB" id="6VKL">
    <property type="method" value="EM"/>
    <property type="resolution" value="4.40 A"/>
    <property type="chains" value="G=1-623"/>
</dbReference>
<dbReference type="PDBsum" id="2B1E"/>
<dbReference type="PDBsum" id="2B7M"/>
<dbReference type="PDBsum" id="2PFV"/>
<dbReference type="PDBsum" id="5YFP"/>
<dbReference type="PDBsum" id="6VKL"/>
<dbReference type="EMDB" id="EMD-21226"/>
<dbReference type="EMDB" id="EMD-6827"/>
<dbReference type="SMR" id="P19658"/>
<dbReference type="BioGRID" id="33671">
    <property type="interactions" value="537"/>
</dbReference>
<dbReference type="ComplexPortal" id="CPX-1890">
    <property type="entry name" value="Exocyst"/>
</dbReference>
<dbReference type="DIP" id="DIP-2934N"/>
<dbReference type="FunCoup" id="P19658">
    <property type="interactions" value="161"/>
</dbReference>
<dbReference type="IntAct" id="P19658">
    <property type="interactions" value="10"/>
</dbReference>
<dbReference type="MINT" id="P19658"/>
<dbReference type="STRING" id="4932.YJL085W"/>
<dbReference type="TCDB" id="1.F.2.1.1">
    <property type="family name" value="the octameric exocyst (exocyst) family"/>
</dbReference>
<dbReference type="iPTMnet" id="P19658"/>
<dbReference type="PaxDb" id="4932-YJL085W"/>
<dbReference type="PeptideAtlas" id="P19658"/>
<dbReference type="EnsemblFungi" id="YJL085W_mRNA">
    <property type="protein sequence ID" value="YJL085W"/>
    <property type="gene ID" value="YJL085W"/>
</dbReference>
<dbReference type="GeneID" id="853359"/>
<dbReference type="KEGG" id="sce:YJL085W"/>
<dbReference type="AGR" id="SGD:S000003621"/>
<dbReference type="SGD" id="S000003621">
    <property type="gene designation" value="EXO70"/>
</dbReference>
<dbReference type="VEuPathDB" id="FungiDB:YJL085W"/>
<dbReference type="eggNOG" id="KOG2344">
    <property type="taxonomic scope" value="Eukaryota"/>
</dbReference>
<dbReference type="GeneTree" id="ENSGT00390000003595"/>
<dbReference type="HOGENOM" id="CLU_010236_4_1_1"/>
<dbReference type="InParanoid" id="P19658"/>
<dbReference type="OMA" id="GIIRAGP"/>
<dbReference type="OrthoDB" id="1922221at2759"/>
<dbReference type="BioCyc" id="YEAST:G3O-31542-MONOMER"/>
<dbReference type="BioGRID-ORCS" id="853359">
    <property type="hits" value="0 hits in 10 CRISPR screens"/>
</dbReference>
<dbReference type="EvolutionaryTrace" id="P19658"/>
<dbReference type="PRO" id="PR:P19658"/>
<dbReference type="Proteomes" id="UP000002311">
    <property type="component" value="Chromosome X"/>
</dbReference>
<dbReference type="RNAct" id="P19658">
    <property type="molecule type" value="protein"/>
</dbReference>
<dbReference type="GO" id="GO:0005935">
    <property type="term" value="C:cellular bud neck"/>
    <property type="evidence" value="ECO:0000314"/>
    <property type="project" value="SGD"/>
</dbReference>
<dbReference type="GO" id="GO:0005934">
    <property type="term" value="C:cellular bud tip"/>
    <property type="evidence" value="ECO:0000314"/>
    <property type="project" value="SGD"/>
</dbReference>
<dbReference type="GO" id="GO:0005737">
    <property type="term" value="C:cytoplasm"/>
    <property type="evidence" value="ECO:0007005"/>
    <property type="project" value="SGD"/>
</dbReference>
<dbReference type="GO" id="GO:0000145">
    <property type="term" value="C:exocyst"/>
    <property type="evidence" value="ECO:0000314"/>
    <property type="project" value="SGD"/>
</dbReference>
<dbReference type="GO" id="GO:0000131">
    <property type="term" value="C:incipient cellular bud site"/>
    <property type="evidence" value="ECO:0000314"/>
    <property type="project" value="SGD"/>
</dbReference>
<dbReference type="GO" id="GO:0043332">
    <property type="term" value="C:mating projection tip"/>
    <property type="evidence" value="ECO:0007005"/>
    <property type="project" value="SGD"/>
</dbReference>
<dbReference type="GO" id="GO:0005886">
    <property type="term" value="C:plasma membrane"/>
    <property type="evidence" value="ECO:0000314"/>
    <property type="project" value="SGD"/>
</dbReference>
<dbReference type="GO" id="GO:0005628">
    <property type="term" value="C:prospore membrane"/>
    <property type="evidence" value="ECO:0007005"/>
    <property type="project" value="SGD"/>
</dbReference>
<dbReference type="GO" id="GO:0030133">
    <property type="term" value="C:transport vesicle"/>
    <property type="evidence" value="ECO:0007669"/>
    <property type="project" value="UniProtKB-SubCell"/>
</dbReference>
<dbReference type="GO" id="GO:0005546">
    <property type="term" value="F:phosphatidylinositol-4,5-bisphosphate binding"/>
    <property type="evidence" value="ECO:0000314"/>
    <property type="project" value="SGD"/>
</dbReference>
<dbReference type="GO" id="GO:0031267">
    <property type="term" value="F:small GTPase binding"/>
    <property type="evidence" value="ECO:0000314"/>
    <property type="project" value="SGD"/>
</dbReference>
<dbReference type="GO" id="GO:0001927">
    <property type="term" value="P:exocyst assembly"/>
    <property type="evidence" value="ECO:0000315"/>
    <property type="project" value="SGD"/>
</dbReference>
<dbReference type="GO" id="GO:0051601">
    <property type="term" value="P:exocyst localization"/>
    <property type="evidence" value="ECO:0000316"/>
    <property type="project" value="SGD"/>
</dbReference>
<dbReference type="GO" id="GO:0006887">
    <property type="term" value="P:exocytosis"/>
    <property type="evidence" value="ECO:0000315"/>
    <property type="project" value="SGD"/>
</dbReference>
<dbReference type="GO" id="GO:0006893">
    <property type="term" value="P:Golgi to plasma membrane transport"/>
    <property type="evidence" value="ECO:0000315"/>
    <property type="project" value="SGD"/>
</dbReference>
<dbReference type="GO" id="GO:0015031">
    <property type="term" value="P:protein transport"/>
    <property type="evidence" value="ECO:0007669"/>
    <property type="project" value="UniProtKB-KW"/>
</dbReference>
<dbReference type="GO" id="GO:0007266">
    <property type="term" value="P:Rho protein signal transduction"/>
    <property type="evidence" value="ECO:0000314"/>
    <property type="project" value="SGD"/>
</dbReference>
<dbReference type="GO" id="GO:0006904">
    <property type="term" value="P:vesicle docking involved in exocytosis"/>
    <property type="evidence" value="ECO:0000303"/>
    <property type="project" value="ComplexPortal"/>
</dbReference>
<dbReference type="FunFam" id="1.10.357.60:FF:000001">
    <property type="entry name" value="Exocyst complex component EXO70"/>
    <property type="match status" value="1"/>
</dbReference>
<dbReference type="FunFam" id="1.20.1280.170:FF:000006">
    <property type="entry name" value="Exocyst complex component EXO70"/>
    <property type="match status" value="1"/>
</dbReference>
<dbReference type="FunFam" id="1.20.1310.30:FF:000001">
    <property type="entry name" value="Exocyst complex component EXO70"/>
    <property type="match status" value="1"/>
</dbReference>
<dbReference type="FunFam" id="1.20.58.1150:FF:000001">
    <property type="entry name" value="Exocyst complex component EXO70"/>
    <property type="match status" value="1"/>
</dbReference>
<dbReference type="Gene3D" id="1.10.357.60">
    <property type="match status" value="1"/>
</dbReference>
<dbReference type="Gene3D" id="1.20.1310.30">
    <property type="match status" value="1"/>
</dbReference>
<dbReference type="Gene3D" id="1.20.58.1150">
    <property type="match status" value="1"/>
</dbReference>
<dbReference type="Gene3D" id="1.20.1280.170">
    <property type="entry name" value="Exocyst complex component Exo70"/>
    <property type="match status" value="1"/>
</dbReference>
<dbReference type="InterPro" id="IPR016159">
    <property type="entry name" value="Cullin_repeat-like_dom_sf"/>
</dbReference>
<dbReference type="InterPro" id="IPR004140">
    <property type="entry name" value="Exo70"/>
</dbReference>
<dbReference type="InterPro" id="IPR046364">
    <property type="entry name" value="Exo70_C"/>
</dbReference>
<dbReference type="PANTHER" id="PTHR12542:SF41">
    <property type="entry name" value="EXOCYST COMPLEX COMPONENT 7"/>
    <property type="match status" value="1"/>
</dbReference>
<dbReference type="PANTHER" id="PTHR12542">
    <property type="entry name" value="EXOCYST COMPLEX PROTEIN EXO70"/>
    <property type="match status" value="1"/>
</dbReference>
<dbReference type="Pfam" id="PF03081">
    <property type="entry name" value="Exo70_C"/>
    <property type="match status" value="1"/>
</dbReference>
<dbReference type="Pfam" id="PF20669">
    <property type="entry name" value="Exo70_N"/>
    <property type="match status" value="1"/>
</dbReference>
<dbReference type="SUPFAM" id="SSF74788">
    <property type="entry name" value="Cullin repeat-like"/>
    <property type="match status" value="1"/>
</dbReference>
<reference key="1">
    <citation type="journal article" date="1996" name="EMBO J.">
        <title>The Exocyst is a multiprotein complex required for exocytosis in Saccharomyces cerevisiae.</title>
        <authorList>
            <person name="TerBush D.R."/>
            <person name="Maurice T."/>
            <person name="Roth D."/>
            <person name="Novick P."/>
        </authorList>
    </citation>
    <scope>NUCLEOTIDE SEQUENCE [GENOMIC DNA]</scope>
    <scope>PROTEIN SEQUENCE OF 36-52</scope>
    <scope>IDENTIFICATION IN THE EXOCYST COMPLEX</scope>
</reference>
<reference key="2">
    <citation type="journal article" date="1987" name="Nucleic Acids Res.">
        <title>Nucleotide sequence of ORF2: an open reading frame upstream of the tRNA ligase gene.</title>
        <authorList>
            <person name="Komatsoulis G.A."/>
            <person name="Westaway S.K."/>
            <person name="Abelson J."/>
        </authorList>
    </citation>
    <scope>NUCLEOTIDE SEQUENCE [GENOMIC DNA]</scope>
</reference>
<reference key="3">
    <citation type="journal article" date="1995" name="Yeast">
        <title>Sequence analysis of a 33.1 kb fragment from the left arm of Saccharomyces cerevisiae chromosome X, including putative proteins with leucine zippers, a fungal Zn(II)2-Cys6 binuclear cluster domain and a putative alpha 2-SCB-alpha 2 binding site.</title>
        <authorList>
            <person name="Miosga T."/>
            <person name="Schaaff-Gerstenschlaeger I."/>
            <person name="Chalwatzis N."/>
            <person name="Baur A."/>
            <person name="Boles E."/>
            <person name="Fournier C."/>
            <person name="Schmitt S."/>
            <person name="Velten C."/>
            <person name="Wilhelm N."/>
            <person name="Zimmermann F.K."/>
        </authorList>
    </citation>
    <scope>NUCLEOTIDE SEQUENCE [GENOMIC DNA]</scope>
    <source>
        <strain>ATCC 204508 / S288c</strain>
    </source>
</reference>
<reference key="4">
    <citation type="journal article" date="1996" name="EMBO J.">
        <title>Complete nucleotide sequence of Saccharomyces cerevisiae chromosome X.</title>
        <authorList>
            <person name="Galibert F."/>
            <person name="Alexandraki D."/>
            <person name="Baur A."/>
            <person name="Boles E."/>
            <person name="Chalwatzis N."/>
            <person name="Chuat J.-C."/>
            <person name="Coster F."/>
            <person name="Cziepluch C."/>
            <person name="de Haan M."/>
            <person name="Domdey H."/>
            <person name="Durand P."/>
            <person name="Entian K.-D."/>
            <person name="Gatius M."/>
            <person name="Goffeau A."/>
            <person name="Grivell L.A."/>
            <person name="Hennemann A."/>
            <person name="Herbert C.J."/>
            <person name="Heumann K."/>
            <person name="Hilger F."/>
            <person name="Hollenberg C.P."/>
            <person name="Huang M.-E."/>
            <person name="Jacq C."/>
            <person name="Jauniaux J.-C."/>
            <person name="Katsoulou C."/>
            <person name="Kirchrath L."/>
            <person name="Kleine K."/>
            <person name="Kordes E."/>
            <person name="Koetter P."/>
            <person name="Liebl S."/>
            <person name="Louis E.J."/>
            <person name="Manus V."/>
            <person name="Mewes H.-W."/>
            <person name="Miosga T."/>
            <person name="Obermaier B."/>
            <person name="Perea J."/>
            <person name="Pohl T.M."/>
            <person name="Portetelle D."/>
            <person name="Pujol A."/>
            <person name="Purnelle B."/>
            <person name="Ramezani Rad M."/>
            <person name="Rasmussen S.W."/>
            <person name="Rose M."/>
            <person name="Rossau R."/>
            <person name="Schaaff-Gerstenschlaeger I."/>
            <person name="Smits P.H.M."/>
            <person name="Scarcez T."/>
            <person name="Soriano N."/>
            <person name="To Van D."/>
            <person name="Tzermia M."/>
            <person name="Van Broekhoven A."/>
            <person name="Vandenbol M."/>
            <person name="Wedler H."/>
            <person name="von Wettstein D."/>
            <person name="Wambutt R."/>
            <person name="Zagulski M."/>
            <person name="Zollner A."/>
            <person name="Karpfinger-Hartl L."/>
        </authorList>
    </citation>
    <scope>NUCLEOTIDE SEQUENCE [LARGE SCALE GENOMIC DNA]</scope>
    <source>
        <strain>ATCC 204508 / S288c</strain>
    </source>
</reference>
<reference key="5">
    <citation type="journal article" date="2014" name="G3 (Bethesda)">
        <title>The reference genome sequence of Saccharomyces cerevisiae: Then and now.</title>
        <authorList>
            <person name="Engel S.R."/>
            <person name="Dietrich F.S."/>
            <person name="Fisk D.G."/>
            <person name="Binkley G."/>
            <person name="Balakrishnan R."/>
            <person name="Costanzo M.C."/>
            <person name="Dwight S.S."/>
            <person name="Hitz B.C."/>
            <person name="Karra K."/>
            <person name="Nash R.S."/>
            <person name="Weng S."/>
            <person name="Wong E.D."/>
            <person name="Lloyd P."/>
            <person name="Skrzypek M.S."/>
            <person name="Miyasato S.R."/>
            <person name="Simison M."/>
            <person name="Cherry J.M."/>
        </authorList>
    </citation>
    <scope>GENOME REANNOTATION</scope>
    <source>
        <strain>ATCC 204508 / S288c</strain>
    </source>
</reference>
<reference key="6">
    <citation type="journal article" date="2007" name="Genome Res.">
        <title>Approaching a complete repository of sequence-verified protein-encoding clones for Saccharomyces cerevisiae.</title>
        <authorList>
            <person name="Hu Y."/>
            <person name="Rolfs A."/>
            <person name="Bhullar B."/>
            <person name="Murthy T.V.S."/>
            <person name="Zhu C."/>
            <person name="Berger M.F."/>
            <person name="Camargo A.A."/>
            <person name="Kelley F."/>
            <person name="McCarron S."/>
            <person name="Jepson D."/>
            <person name="Richardson A."/>
            <person name="Raphael J."/>
            <person name="Moreira D."/>
            <person name="Taycher E."/>
            <person name="Zuo D."/>
            <person name="Mohr S."/>
            <person name="Kane M.F."/>
            <person name="Williamson J."/>
            <person name="Simpson A.J.G."/>
            <person name="Bulyk M.L."/>
            <person name="Harlow E."/>
            <person name="Marsischky G."/>
            <person name="Kolodner R.D."/>
            <person name="LaBaer J."/>
        </authorList>
    </citation>
    <scope>NUCLEOTIDE SEQUENCE [GENOMIC DNA]</scope>
    <source>
        <strain>ATCC 204508 / S288c</strain>
    </source>
</reference>
<reference key="7">
    <citation type="journal article" date="1988" name="J. Biol. Chem.">
        <title>Structure and function of the yeast tRNA ligase gene.</title>
        <authorList>
            <person name="Westaway S.K."/>
            <person name="Phizicky E.M."/>
            <person name="Abelson J."/>
        </authorList>
    </citation>
    <scope>NUCLEOTIDE SEQUENCE [GENOMIC DNA] OF 1-70</scope>
    <source>
        <strain>EJ101</strain>
    </source>
</reference>
<reference key="8">
    <citation type="journal article" date="1999" name="Mol. Cell. Biol.">
        <title>Rho3 of Saccharomyces cerevisiae, which regulates the actin cytoskeleton and exocytosis, is a GTPase which interacts with Myo2 and Exo70.</title>
        <authorList>
            <person name="Robinson N.G.G."/>
            <person name="Guo L."/>
            <person name="Imai J."/>
            <person name="Toh-e A."/>
            <person name="Matsui Y."/>
            <person name="Tamanoi F."/>
        </authorList>
    </citation>
    <scope>INTERACTION WITH RHO3</scope>
</reference>
<reference key="9">
    <citation type="journal article" date="2003" name="Nature">
        <title>Global analysis of protein localization in budding yeast.</title>
        <authorList>
            <person name="Huh W.-K."/>
            <person name="Falvo J.V."/>
            <person name="Gerke L.C."/>
            <person name="Carroll A.S."/>
            <person name="Howson R.W."/>
            <person name="Weissman J.S."/>
            <person name="O'Shea E.K."/>
        </authorList>
    </citation>
    <scope>SUBCELLULAR LOCATION [LARGE SCALE ANALYSIS]</scope>
</reference>
<reference key="10">
    <citation type="journal article" date="2003" name="Nature">
        <title>Global analysis of protein expression in yeast.</title>
        <authorList>
            <person name="Ghaemmaghami S."/>
            <person name="Huh W.-K."/>
            <person name="Bower K."/>
            <person name="Howson R.W."/>
            <person name="Belle A."/>
            <person name="Dephoure N."/>
            <person name="O'Shea E.K."/>
            <person name="Weissman J.S."/>
        </authorList>
    </citation>
    <scope>LEVEL OF PROTEIN EXPRESSION [LARGE SCALE ANALYSIS]</scope>
</reference>
<reference key="11">
    <citation type="journal article" date="2004" name="J. Cell Biol.">
        <title>Functional specialization within a vesicle tethering complex: bypass of a subset of exocyst deletion mutants by Sec1p or Sec4p.</title>
        <authorList>
            <person name="Wiederkehr A."/>
            <person name="De Craene J.-O."/>
            <person name="Ferro-Novick S."/>
            <person name="Novick P."/>
        </authorList>
    </citation>
    <scope>FUNCTION</scope>
</reference>
<reference key="12">
    <citation type="journal article" date="2004" name="J. Cell Biol.">
        <title>Vesicles carry most exocyst subunits to exocytic sites marked by the remaining two subunits, Sec3p and Exo70p.</title>
        <authorList>
            <person name="Boyd C."/>
            <person name="Hughes T."/>
            <person name="Pypaert M."/>
            <person name="Novick P."/>
        </authorList>
    </citation>
    <scope>SUBCELLULAR LOCATION</scope>
</reference>
<reference key="13">
    <citation type="journal article" date="2005" name="J. Biol. Chem.">
        <title>The critical role of EXO84P in the organization and polarized localization of the exocyst complex.</title>
        <authorList>
            <person name="Zhang X."/>
            <person name="Zajac A."/>
            <person name="Zhang J."/>
            <person name="Wang P."/>
            <person name="Li M."/>
            <person name="Murray J."/>
            <person name="TerBush D.R."/>
            <person name="Guo W."/>
        </authorList>
    </citation>
    <scope>SUBCELLULAR LOCATION</scope>
</reference>
<reference key="14">
    <citation type="journal article" date="2005" name="Nat. Struct. Mol. Biol.">
        <title>The structures of exocyst subunit Exo70p and the Exo84p C-terminal domains reveal a common motif.</title>
        <authorList>
            <person name="Dong G."/>
            <person name="Hutagalung A.H."/>
            <person name="Fu C."/>
            <person name="Novick P."/>
            <person name="Reinisch K.M."/>
        </authorList>
    </citation>
    <scope>X-RAY CRYSTALLOGRAPHY (2.0 ANGSTROMS) OF 63-623</scope>
    <scope>INTERACTION WITH RHO3</scope>
</reference>
<comment type="function">
    <text evidence="3">Involved in the secretory pathway as part of the exocyst complex which tethers secretory vesicles to the sites of exocytosis. Plays a role in the assembly of the exocyst.</text>
</comment>
<comment type="subunit">
    <text evidence="1 6 7">The exocyst complex is composed of SEC3, SEC5, SEC6, SEC8, SEC10, SEC15, EXO70 and EXO84. Interacts with RHO3.</text>
</comment>
<comment type="interaction">
    <interactant intactId="EBI-6717">
        <id>P19658</id>
    </interactant>
    <interactant intactId="EBI-21567">
        <id>P38261</id>
        <label>EXO84</label>
    </interactant>
    <organismsDiffer>false</organismsDiffer>
    <experiments>3</experiments>
</comment>
<comment type="interaction">
    <interactant intactId="EBI-6717">
        <id>P19658</id>
    </interactant>
    <interactant intactId="EBI-15138">
        <id>Q00245</id>
        <label>RHO3</label>
    </interactant>
    <organismsDiffer>false</organismsDiffer>
    <experiments>4</experiments>
</comment>
<comment type="interaction">
    <interactant intactId="EBI-6717">
        <id>P19658</id>
    </interactant>
    <interactant intactId="EBI-16504">
        <id>Q06245</id>
        <label>SEC10</label>
    </interactant>
    <organismsDiffer>false</organismsDiffer>
    <experiments>3</experiments>
</comment>
<comment type="interaction">
    <interactant intactId="EBI-6717">
        <id>P19658</id>
    </interactant>
    <interactant intactId="EBI-16543">
        <id>P22224</id>
        <label>SEC15</label>
    </interactant>
    <organismsDiffer>false</organismsDiffer>
    <experiments>3</experiments>
</comment>
<comment type="interaction">
    <interactant intactId="EBI-6717">
        <id>P19658</id>
    </interactant>
    <interactant intactId="EBI-16874">
        <id>P32844</id>
        <label>SEC6</label>
    </interactant>
    <organismsDiffer>false</organismsDiffer>
    <experiments>4</experiments>
</comment>
<comment type="interaction">
    <interactant intactId="EBI-6717">
        <id>P19658</id>
    </interactant>
    <interactant intactId="EBI-16896">
        <id>P32855</id>
        <label>SEC8</label>
    </interactant>
    <organismsDiffer>false</organismsDiffer>
    <experiments>3</experiments>
</comment>
<comment type="subcellular location">
    <subcellularLocation>
        <location evidence="4">Cytoplasmic vesicle</location>
        <location evidence="4">Secretory vesicle</location>
    </subcellularLocation>
    <subcellularLocation>
        <location evidence="5">Bud</location>
    </subcellularLocation>
    <subcellularLocation>
        <location evidence="8">Bud neck</location>
    </subcellularLocation>
    <text evidence="5">Its polarization in the cell depends on EXO84.</text>
</comment>
<comment type="miscellaneous">
    <text evidence="2">Present with 4280 molecules/cell in log phase SD medium.</text>
</comment>
<comment type="similarity">
    <text evidence="8">Belongs to the EXO70 family.</text>
</comment>
<sequence>MPAEIDIDEADVLVLSQELQKTSKLTFEINKSLKKIAATSNQSSQLFTPILARNNVLTTLQRNIESTLNSVASVKDLANEASKYEIILQKGINQVGLKQYTQVVHKLDDMLEDIQSGQANREENSEFHGILTHLEQLIKRSEAQLRVYFISILNSIKPFDPQINITKKMPFPYYEDQQLGALSWILDYFHGNSEGSIIQDILVGERSKLILKCMAFLEPFAKEISTAKNAPYEKGSSGMNSYTEALLGFIANEKSLVDDLYSQYTESKPHVLSQILSPLISAYAKLFGANLKIVRSNLENFGFFSFELVESINDVKKSLRGKELQNYNLLQDCTQEVRQVTQSLFRDAIDRIIKKANSISTIPSNNGVTEATVDTMSRLRKFSEYKNGCLGAMDNITRENWLPSNYKEKEYTLQNEALNWEDHNVLLSCFISDCIDTLAVNLERKAQIALMPNQEPDVANPNSSKNKHKQRIGFFILMNLTLVEQIVEKSELNLMLAGEGHSRLERLKKRYISYMVSDWRDLTANLMDSVFIDSSGKKSKDKEQIKEKFRKFNEGFEDLVSKTKQYKLSDPSLKVTLKSEIISLVMPMYERFYSRYKDSFKNPRKHIKYTPDELTTVLNQLVR</sequence>
<name>EXO70_YEAST</name>